<comment type="function">
    <text evidence="1">Metallophosphoesterase that catalyzes the removal of a side-chain ethanolamine-phosphate (EtNP) from the second mannose of the GPI-anchor protein intermediate. Participates in the glycan remodeling steps of GPI-anchor maturation to allow an efficient transport of GPI-anchor proteins from the endoplasmic reticulum to the Golgi.</text>
</comment>
<comment type="cofactor">
    <cofactor evidence="1">
        <name>Mn(2+)</name>
        <dbReference type="ChEBI" id="CHEBI:29035"/>
    </cofactor>
    <text evidence="1">Binds 2 manganese ions per subunit.</text>
</comment>
<comment type="subunit">
    <text evidence="1">Interacts with GPI-anchor proteins (via the GPI portion). Interacts with TMED10.</text>
</comment>
<comment type="subcellular location">
    <subcellularLocation>
        <location evidence="1">Endoplasmic reticulum-Golgi intermediate compartment membrane</location>
        <topology evidence="2">Multi-pass membrane protein</topology>
    </subcellularLocation>
    <text evidence="1">Also localizes to endoplasmic reticulum exit site.</text>
</comment>
<comment type="similarity">
    <text evidence="3">Belongs to the metallophosphoesterase superfamily. MPPE1 family.</text>
</comment>
<keyword id="KW-0931">ER-Golgi transport</keyword>
<keyword id="KW-0337">GPI-anchor biosynthesis</keyword>
<keyword id="KW-0378">Hydrolase</keyword>
<keyword id="KW-0464">Manganese</keyword>
<keyword id="KW-0472">Membrane</keyword>
<keyword id="KW-0479">Metal-binding</keyword>
<keyword id="KW-1185">Reference proteome</keyword>
<keyword id="KW-0812">Transmembrane</keyword>
<keyword id="KW-1133">Transmembrane helix</keyword>
<keyword id="KW-0813">Transport</keyword>
<reference key="1">
    <citation type="submission" date="2005-07" db="EMBL/GenBank/DDBJ databases">
        <authorList>
            <person name="Mural R.J."/>
            <person name="Adams M.D."/>
            <person name="Myers E.W."/>
            <person name="Smith H.O."/>
            <person name="Venter J.C."/>
        </authorList>
    </citation>
    <scope>NUCLEOTIDE SEQUENCE [LARGE SCALE GENOMIC DNA]</scope>
    <source>
        <strain>Brown Norway</strain>
    </source>
</reference>
<reference key="2">
    <citation type="journal article" date="2004" name="Genome Res.">
        <title>The status, quality, and expansion of the NIH full-length cDNA project: the Mammalian Gene Collection (MGC).</title>
        <authorList>
            <consortium name="The MGC Project Team"/>
        </authorList>
    </citation>
    <scope>NUCLEOTIDE SEQUENCE [LARGE SCALE MRNA]</scope>
    <source>
        <tissue>Heart</tissue>
    </source>
</reference>
<organism>
    <name type="scientific">Rattus norvegicus</name>
    <name type="common">Rat</name>
    <dbReference type="NCBI Taxonomy" id="10116"/>
    <lineage>
        <taxon>Eukaryota</taxon>
        <taxon>Metazoa</taxon>
        <taxon>Chordata</taxon>
        <taxon>Craniata</taxon>
        <taxon>Vertebrata</taxon>
        <taxon>Euteleostomi</taxon>
        <taxon>Mammalia</taxon>
        <taxon>Eutheria</taxon>
        <taxon>Euarchontoglires</taxon>
        <taxon>Glires</taxon>
        <taxon>Rodentia</taxon>
        <taxon>Myomorpha</taxon>
        <taxon>Muroidea</taxon>
        <taxon>Muridae</taxon>
        <taxon>Murinae</taxon>
        <taxon>Rattus</taxon>
    </lineage>
</organism>
<dbReference type="EC" id="3.1.-.-" evidence="1"/>
<dbReference type="EMBL" id="CH473971">
    <property type="protein sequence ID" value="EDM14719.1"/>
    <property type="molecule type" value="Genomic_DNA"/>
</dbReference>
<dbReference type="EMBL" id="BC162043">
    <property type="protein sequence ID" value="AAI62043.1"/>
    <property type="molecule type" value="mRNA"/>
</dbReference>
<dbReference type="RefSeq" id="NP_001101905.1">
    <property type="nucleotide sequence ID" value="NM_001108435.2"/>
</dbReference>
<dbReference type="RefSeq" id="XP_006254941.1">
    <property type="nucleotide sequence ID" value="XM_006254879.5"/>
</dbReference>
<dbReference type="FunCoup" id="B1WC86">
    <property type="interactions" value="1227"/>
</dbReference>
<dbReference type="STRING" id="10116.ENSRNOP00000025164"/>
<dbReference type="PhosphoSitePlus" id="B1WC86"/>
<dbReference type="PaxDb" id="10116-ENSRNOP00000025164"/>
<dbReference type="PeptideAtlas" id="B1WC86"/>
<dbReference type="Ensembl" id="ENSRNOT00000025164.5">
    <property type="protein sequence ID" value="ENSRNOP00000025164.4"/>
    <property type="gene ID" value="ENSRNOG00000018648.5"/>
</dbReference>
<dbReference type="GeneID" id="361344"/>
<dbReference type="KEGG" id="rno:361344"/>
<dbReference type="UCSC" id="RGD:1309184">
    <property type="organism name" value="rat"/>
</dbReference>
<dbReference type="AGR" id="RGD:1309184"/>
<dbReference type="CTD" id="65258"/>
<dbReference type="RGD" id="1309184">
    <property type="gene designation" value="Mppe1"/>
</dbReference>
<dbReference type="eggNOG" id="KOG3662">
    <property type="taxonomic scope" value="Eukaryota"/>
</dbReference>
<dbReference type="GeneTree" id="ENSGT00390000013236"/>
<dbReference type="HOGENOM" id="CLU_047168_2_0_1"/>
<dbReference type="InParanoid" id="B1WC86"/>
<dbReference type="OMA" id="LHCMKYP"/>
<dbReference type="OrthoDB" id="9984693at2759"/>
<dbReference type="PhylomeDB" id="B1WC86"/>
<dbReference type="TreeFam" id="TF314437"/>
<dbReference type="PRO" id="PR:B1WC86"/>
<dbReference type="Proteomes" id="UP000002494">
    <property type="component" value="Chromosome 18"/>
</dbReference>
<dbReference type="Proteomes" id="UP000234681">
    <property type="component" value="Chromosome 18"/>
</dbReference>
<dbReference type="Bgee" id="ENSRNOG00000018648">
    <property type="expression patterns" value="Expressed in liver and 19 other cell types or tissues"/>
</dbReference>
<dbReference type="GO" id="GO:0070971">
    <property type="term" value="C:endoplasmic reticulum exit site"/>
    <property type="evidence" value="ECO:0000250"/>
    <property type="project" value="UniProtKB"/>
</dbReference>
<dbReference type="GO" id="GO:0033116">
    <property type="term" value="C:endoplasmic reticulum-Golgi intermediate compartment membrane"/>
    <property type="evidence" value="ECO:0007669"/>
    <property type="project" value="UniProtKB-SubCell"/>
</dbReference>
<dbReference type="GO" id="GO:0005794">
    <property type="term" value="C:Golgi apparatus"/>
    <property type="evidence" value="ECO:0007669"/>
    <property type="project" value="UniProtKB-SubCell"/>
</dbReference>
<dbReference type="GO" id="GO:0062050">
    <property type="term" value="F:GPI-mannose ethanolamine phosphate phosphodiesterase activity"/>
    <property type="evidence" value="ECO:0000250"/>
    <property type="project" value="UniProtKB"/>
</dbReference>
<dbReference type="GO" id="GO:0030145">
    <property type="term" value="F:manganese ion binding"/>
    <property type="evidence" value="ECO:0000250"/>
    <property type="project" value="UniProtKB"/>
</dbReference>
<dbReference type="GO" id="GO:0006888">
    <property type="term" value="P:endoplasmic reticulum to Golgi vesicle-mediated transport"/>
    <property type="evidence" value="ECO:0000250"/>
    <property type="project" value="UniProtKB"/>
</dbReference>
<dbReference type="GO" id="GO:0006506">
    <property type="term" value="P:GPI anchor biosynthetic process"/>
    <property type="evidence" value="ECO:0000250"/>
    <property type="project" value="UniProtKB"/>
</dbReference>
<dbReference type="CDD" id="cd08165">
    <property type="entry name" value="MPP_MPPE1"/>
    <property type="match status" value="1"/>
</dbReference>
<dbReference type="FunFam" id="3.60.21.10:FF:000022">
    <property type="entry name" value="Putative metallophosphoesterase 1"/>
    <property type="match status" value="1"/>
</dbReference>
<dbReference type="Gene3D" id="3.60.21.10">
    <property type="match status" value="1"/>
</dbReference>
<dbReference type="InterPro" id="IPR004843">
    <property type="entry name" value="Calcineurin-like_PHP_ApaH"/>
</dbReference>
<dbReference type="InterPro" id="IPR029052">
    <property type="entry name" value="Metallo-depent_PP-like"/>
</dbReference>
<dbReference type="InterPro" id="IPR039541">
    <property type="entry name" value="MPP_MPPE1"/>
</dbReference>
<dbReference type="InterPro" id="IPR033308">
    <property type="entry name" value="PGAP5/Cdc1/Ted1"/>
</dbReference>
<dbReference type="PANTHER" id="PTHR13315">
    <property type="entry name" value="METALLO PHOSPHOESTERASE RELATED"/>
    <property type="match status" value="1"/>
</dbReference>
<dbReference type="PANTHER" id="PTHR13315:SF0">
    <property type="entry name" value="METALLOPHOSPHOESTERASE 1"/>
    <property type="match status" value="1"/>
</dbReference>
<dbReference type="Pfam" id="PF00149">
    <property type="entry name" value="Metallophos"/>
    <property type="match status" value="1"/>
</dbReference>
<dbReference type="SUPFAM" id="SSF56300">
    <property type="entry name" value="Metallo-dependent phosphatases"/>
    <property type="match status" value="1"/>
</dbReference>
<gene>
    <name evidence="4" type="primary">Mppe1</name>
    <name evidence="1" type="synonym">Pgap5</name>
</gene>
<sequence>MALVRWGLRRQNFHLLRRRRVLLLKLTVVVISVLLFCEYFIYYLVLFRCHWPEVKMPARGGRQEPVLKAMFLADTHLLGEIRGHWLDKLRREWQMERAFQTALWLLQPEVVFILGDVFDEGKWSSAQAWADDLHRFQRMFRHGSHVQLKVVIGNHDIGFHYQMSKYRINRFEKVFGSERLFSLKGVNFVMVNSVAMEGDGCTICSEAEAELREISRKLNCSQEQVQGSSQCDHEPRLPLSAPVLLQHYPLYRASDANCSGEDAAPPEERSVPFEEKYDVLSREASQKLLWWLRPRLILSGHTHSACEVLHPGGAPEVSVPSFSWRNRNNPSFIMGSLTSRDYALSKCYLPCEDTVLTTYCAAAAFLLVLILAHFERLPSSFLFGWKLCRSHLRR</sequence>
<protein>
    <recommendedName>
        <fullName evidence="3">Metallophosphoesterase 1</fullName>
        <ecNumber evidence="1">3.1.-.-</ecNumber>
    </recommendedName>
    <alternativeName>
        <fullName>Post-GPI attachment to proteins factor 5</fullName>
    </alternativeName>
</protein>
<name>MPPE1_RAT</name>
<accession>B1WC86</accession>
<proteinExistence type="evidence at transcript level"/>
<evidence type="ECO:0000250" key="1">
    <source>
        <dbReference type="UniProtKB" id="Q53F39"/>
    </source>
</evidence>
<evidence type="ECO:0000255" key="2"/>
<evidence type="ECO:0000305" key="3"/>
<evidence type="ECO:0000312" key="4">
    <source>
        <dbReference type="RGD" id="1309184"/>
    </source>
</evidence>
<feature type="chain" id="PRO_0000355204" description="Metallophosphoesterase 1">
    <location>
        <begin position="1"/>
        <end position="394"/>
    </location>
</feature>
<feature type="transmembrane region" description="Helical" evidence="2">
    <location>
        <begin position="27"/>
        <end position="47"/>
    </location>
</feature>
<feature type="transmembrane region" description="Helical" evidence="2">
    <location>
        <begin position="354"/>
        <end position="374"/>
    </location>
</feature>
<feature type="binding site" evidence="1">
    <location>
        <position position="74"/>
    </location>
    <ligand>
        <name>a divalent metal cation</name>
        <dbReference type="ChEBI" id="CHEBI:60240"/>
        <label>2</label>
    </ligand>
</feature>
<feature type="binding site" evidence="1">
    <location>
        <position position="116"/>
    </location>
    <ligand>
        <name>a divalent metal cation</name>
        <dbReference type="ChEBI" id="CHEBI:60240"/>
        <label>1</label>
    </ligand>
</feature>
<feature type="binding site" evidence="1">
    <location>
        <position position="116"/>
    </location>
    <ligand>
        <name>a divalent metal cation</name>
        <dbReference type="ChEBI" id="CHEBI:60240"/>
        <label>2</label>
    </ligand>
</feature>
<feature type="binding site" evidence="1">
    <location>
        <position position="154"/>
    </location>
    <ligand>
        <name>a divalent metal cation</name>
        <dbReference type="ChEBI" id="CHEBI:60240"/>
        <label>1</label>
    </ligand>
</feature>
<feature type="binding site" evidence="1">
    <location>
        <position position="247"/>
    </location>
    <ligand>
        <name>a divalent metal cation</name>
        <dbReference type="ChEBI" id="CHEBI:60240"/>
        <label>1</label>
    </ligand>
</feature>
<feature type="binding site" evidence="1">
    <location>
        <position position="247"/>
    </location>
    <ligand>
        <name>a divalent metal cation</name>
        <dbReference type="ChEBI" id="CHEBI:60240"/>
        <label>2</label>
    </ligand>
</feature>
<feature type="binding site" evidence="1">
    <location>
        <position position="301"/>
    </location>
    <ligand>
        <name>a divalent metal cation</name>
        <dbReference type="ChEBI" id="CHEBI:60240"/>
        <label>1</label>
    </ligand>
</feature>
<feature type="binding site" evidence="1">
    <location>
        <position position="303"/>
    </location>
    <ligand>
        <name>a divalent metal cation</name>
        <dbReference type="ChEBI" id="CHEBI:60240"/>
        <label>2</label>
    </ligand>
</feature>